<organism>
    <name type="scientific">Salmonella paratyphi B (strain ATCC BAA-1250 / SPB7)</name>
    <dbReference type="NCBI Taxonomy" id="1016998"/>
    <lineage>
        <taxon>Bacteria</taxon>
        <taxon>Pseudomonadati</taxon>
        <taxon>Pseudomonadota</taxon>
        <taxon>Gammaproteobacteria</taxon>
        <taxon>Enterobacterales</taxon>
        <taxon>Enterobacteriaceae</taxon>
        <taxon>Salmonella</taxon>
    </lineage>
</organism>
<keyword id="KW-0240">DNA-directed RNA polymerase</keyword>
<keyword id="KW-0548">Nucleotidyltransferase</keyword>
<keyword id="KW-0804">Transcription</keyword>
<keyword id="KW-0808">Transferase</keyword>
<gene>
    <name evidence="1" type="primary">rpoZ</name>
    <name type="ordered locus">SPAB_04642</name>
</gene>
<feature type="chain" id="PRO_1000079644" description="DNA-directed RNA polymerase subunit omega">
    <location>
        <begin position="1"/>
        <end position="91"/>
    </location>
</feature>
<name>RPOZ_SALPB</name>
<accession>A9MVP7</accession>
<comment type="function">
    <text evidence="1">Promotes RNA polymerase assembly. Latches the N- and C-terminal regions of the beta' subunit thereby facilitating its interaction with the beta and alpha subunits.</text>
</comment>
<comment type="catalytic activity">
    <reaction evidence="1">
        <text>RNA(n) + a ribonucleoside 5'-triphosphate = RNA(n+1) + diphosphate</text>
        <dbReference type="Rhea" id="RHEA:21248"/>
        <dbReference type="Rhea" id="RHEA-COMP:14527"/>
        <dbReference type="Rhea" id="RHEA-COMP:17342"/>
        <dbReference type="ChEBI" id="CHEBI:33019"/>
        <dbReference type="ChEBI" id="CHEBI:61557"/>
        <dbReference type="ChEBI" id="CHEBI:140395"/>
        <dbReference type="EC" id="2.7.7.6"/>
    </reaction>
</comment>
<comment type="subunit">
    <text evidence="1">The RNAP catalytic core consists of 2 alpha, 1 beta, 1 beta' and 1 omega subunit. When a sigma factor is associated with the core the holoenzyme is formed, which can initiate transcription.</text>
</comment>
<comment type="similarity">
    <text evidence="1">Belongs to the RNA polymerase subunit omega family.</text>
</comment>
<reference key="1">
    <citation type="submission" date="2007-11" db="EMBL/GenBank/DDBJ databases">
        <authorList>
            <consortium name="The Salmonella enterica serovar Paratyphi B Genome Sequencing Project"/>
            <person name="McClelland M."/>
            <person name="Sanderson E.K."/>
            <person name="Porwollik S."/>
            <person name="Spieth J."/>
            <person name="Clifton W.S."/>
            <person name="Fulton R."/>
            <person name="Cordes M."/>
            <person name="Wollam A."/>
            <person name="Shah N."/>
            <person name="Pepin K."/>
            <person name="Bhonagiri V."/>
            <person name="Nash W."/>
            <person name="Johnson M."/>
            <person name="Thiruvilangam P."/>
            <person name="Wilson R."/>
        </authorList>
    </citation>
    <scope>NUCLEOTIDE SEQUENCE [LARGE SCALE GENOMIC DNA]</scope>
    <source>
        <strain>ATCC BAA-1250 / SPB7</strain>
    </source>
</reference>
<sequence>MARVTVQDAVEKIGNRFDLVLVAARRARQMQVGGKDPLVPEENDKTTVIALREIEEGLINNQILDVRERQEQQEQEAAELQAVTAIAEGRR</sequence>
<dbReference type="EC" id="2.7.7.6" evidence="1"/>
<dbReference type="EMBL" id="CP000886">
    <property type="protein sequence ID" value="ABX69955.1"/>
    <property type="molecule type" value="Genomic_DNA"/>
</dbReference>
<dbReference type="RefSeq" id="WP_000135058.1">
    <property type="nucleotide sequence ID" value="NC_010102.1"/>
</dbReference>
<dbReference type="SMR" id="A9MVP7"/>
<dbReference type="GeneID" id="98390719"/>
<dbReference type="KEGG" id="spq:SPAB_04642"/>
<dbReference type="PATRIC" id="fig|1016998.12.peg.4368"/>
<dbReference type="HOGENOM" id="CLU_125406_5_3_6"/>
<dbReference type="BioCyc" id="SENT1016998:SPAB_RS18900-MONOMER"/>
<dbReference type="Proteomes" id="UP000008556">
    <property type="component" value="Chromosome"/>
</dbReference>
<dbReference type="GO" id="GO:0000428">
    <property type="term" value="C:DNA-directed RNA polymerase complex"/>
    <property type="evidence" value="ECO:0007669"/>
    <property type="project" value="UniProtKB-KW"/>
</dbReference>
<dbReference type="GO" id="GO:0003677">
    <property type="term" value="F:DNA binding"/>
    <property type="evidence" value="ECO:0007669"/>
    <property type="project" value="UniProtKB-UniRule"/>
</dbReference>
<dbReference type="GO" id="GO:0003899">
    <property type="term" value="F:DNA-directed RNA polymerase activity"/>
    <property type="evidence" value="ECO:0007669"/>
    <property type="project" value="UniProtKB-UniRule"/>
</dbReference>
<dbReference type="GO" id="GO:0006351">
    <property type="term" value="P:DNA-templated transcription"/>
    <property type="evidence" value="ECO:0007669"/>
    <property type="project" value="UniProtKB-UniRule"/>
</dbReference>
<dbReference type="FunFam" id="3.90.940.10:FF:000001">
    <property type="entry name" value="DNA-directed RNA polymerase subunit omega"/>
    <property type="match status" value="1"/>
</dbReference>
<dbReference type="Gene3D" id="3.90.940.10">
    <property type="match status" value="1"/>
</dbReference>
<dbReference type="HAMAP" id="MF_00366">
    <property type="entry name" value="RNApol_bact_RpoZ"/>
    <property type="match status" value="1"/>
</dbReference>
<dbReference type="InterPro" id="IPR003716">
    <property type="entry name" value="DNA-dir_RNA_pol_omega"/>
</dbReference>
<dbReference type="InterPro" id="IPR006110">
    <property type="entry name" value="Pol_omega/Rpo6/RPB6"/>
</dbReference>
<dbReference type="InterPro" id="IPR036161">
    <property type="entry name" value="RPB6/omega-like_sf"/>
</dbReference>
<dbReference type="NCBIfam" id="TIGR00690">
    <property type="entry name" value="rpoZ"/>
    <property type="match status" value="1"/>
</dbReference>
<dbReference type="PANTHER" id="PTHR34476">
    <property type="entry name" value="DNA-DIRECTED RNA POLYMERASE SUBUNIT OMEGA"/>
    <property type="match status" value="1"/>
</dbReference>
<dbReference type="PANTHER" id="PTHR34476:SF1">
    <property type="entry name" value="DNA-DIRECTED RNA POLYMERASE SUBUNIT OMEGA"/>
    <property type="match status" value="1"/>
</dbReference>
<dbReference type="Pfam" id="PF01192">
    <property type="entry name" value="RNA_pol_Rpb6"/>
    <property type="match status" value="1"/>
</dbReference>
<dbReference type="SMART" id="SM01409">
    <property type="entry name" value="RNA_pol_Rpb6"/>
    <property type="match status" value="1"/>
</dbReference>
<dbReference type="SUPFAM" id="SSF63562">
    <property type="entry name" value="RPB6/omega subunit-like"/>
    <property type="match status" value="1"/>
</dbReference>
<evidence type="ECO:0000255" key="1">
    <source>
        <dbReference type="HAMAP-Rule" id="MF_00366"/>
    </source>
</evidence>
<proteinExistence type="inferred from homology"/>
<protein>
    <recommendedName>
        <fullName evidence="1">DNA-directed RNA polymerase subunit omega</fullName>
        <shortName evidence="1">RNAP omega subunit</shortName>
        <ecNumber evidence="1">2.7.7.6</ecNumber>
    </recommendedName>
    <alternativeName>
        <fullName evidence="1">RNA polymerase omega subunit</fullName>
    </alternativeName>
    <alternativeName>
        <fullName evidence="1">Transcriptase subunit omega</fullName>
    </alternativeName>
</protein>